<accession>Q2VZP8</accession>
<keyword id="KW-0028">Amino-acid biosynthesis</keyword>
<keyword id="KW-0413">Isomerase</keyword>
<keyword id="KW-0486">Methionine biosynthesis</keyword>
<comment type="function">
    <text evidence="1">Catalyzes the interconversion of methylthioribose-1-phosphate (MTR-1-P) into methylthioribulose-1-phosphate (MTRu-1-P).</text>
</comment>
<comment type="catalytic activity">
    <reaction evidence="1">
        <text>5-(methylsulfanyl)-alpha-D-ribose 1-phosphate = 5-(methylsulfanyl)-D-ribulose 1-phosphate</text>
        <dbReference type="Rhea" id="RHEA:19989"/>
        <dbReference type="ChEBI" id="CHEBI:58533"/>
        <dbReference type="ChEBI" id="CHEBI:58548"/>
        <dbReference type="EC" id="5.3.1.23"/>
    </reaction>
</comment>
<comment type="pathway">
    <text evidence="1">Amino-acid biosynthesis; L-methionine biosynthesis via salvage pathway; L-methionine from S-methyl-5-thio-alpha-D-ribose 1-phosphate: step 1/6.</text>
</comment>
<comment type="similarity">
    <text evidence="2">Belongs to the eIF-2B alpha/beta/delta subunits family. MtnA subfamily.</text>
</comment>
<sequence length="362" mass="39040">MKINGTPYRTIWLAKDGRTVEIIDQTRLPHEFVVVPLASLEDAAKSIKDMWVRGAPLIGATAAYGMALATLADASDAGLERAYQVLHATRPTAINLKWALDEMIAALTPLPVPERSAAAYARAAEICDEDSAQNAALGEHGAAIIAAHHKAKNRTINILTHCNAGWLATVDWGTALAPIYKAFDAGIPLHVWVDETRPRNQGASLTARELNWHGVPHTVIADNTGGHLMQHGMVDLCIVGTDRTTRNGDVCNKIGTYLKALAAKDNNVPFYVGLPSPTIDWNVADGVKEIPIEERSDREQTHIFGKTEDGVVREVQVTPDGSPAVNYGFDVTPARLVTGLITERGVCEASPEGLKGLFPERA</sequence>
<feature type="chain" id="PRO_1000215900" description="Methylthioribose-1-phosphate isomerase">
    <location>
        <begin position="1"/>
        <end position="362"/>
    </location>
</feature>
<feature type="active site" description="Proton donor" evidence="1">
    <location>
        <position position="242"/>
    </location>
</feature>
<feature type="binding site" evidence="1">
    <location>
        <begin position="53"/>
        <end position="55"/>
    </location>
    <ligand>
        <name>substrate</name>
    </ligand>
</feature>
<feature type="binding site" evidence="1">
    <location>
        <position position="90"/>
    </location>
    <ligand>
        <name>substrate</name>
    </ligand>
</feature>
<feature type="binding site" evidence="1">
    <location>
        <position position="201"/>
    </location>
    <ligand>
        <name>substrate</name>
    </ligand>
</feature>
<feature type="binding site" evidence="1">
    <location>
        <begin position="252"/>
        <end position="253"/>
    </location>
    <ligand>
        <name>substrate</name>
    </ligand>
</feature>
<feature type="site" description="Transition state stabilizer" evidence="1">
    <location>
        <position position="162"/>
    </location>
</feature>
<reference key="1">
    <citation type="journal article" date="2005" name="DNA Res.">
        <title>Complete genome sequence of the facultative anaerobic magnetotactic bacterium Magnetospirillum sp. strain AMB-1.</title>
        <authorList>
            <person name="Matsunaga T."/>
            <person name="Okamura Y."/>
            <person name="Fukuda Y."/>
            <person name="Wahyudi A.T."/>
            <person name="Murase Y."/>
            <person name="Takeyama H."/>
        </authorList>
    </citation>
    <scope>NUCLEOTIDE SEQUENCE [LARGE SCALE GENOMIC DNA]</scope>
    <source>
        <strain>ATCC 700264 / AMB-1</strain>
    </source>
</reference>
<evidence type="ECO:0000255" key="1">
    <source>
        <dbReference type="HAMAP-Rule" id="MF_01678"/>
    </source>
</evidence>
<evidence type="ECO:0000305" key="2"/>
<protein>
    <recommendedName>
        <fullName evidence="1">Methylthioribose-1-phosphate isomerase</fullName>
        <shortName evidence="1">M1Pi</shortName>
        <shortName evidence="1">MTR-1-P isomerase</shortName>
        <ecNumber evidence="1">5.3.1.23</ecNumber>
    </recommendedName>
    <alternativeName>
        <fullName evidence="1">S-methyl-5-thioribose-1-phosphate isomerase</fullName>
    </alternativeName>
</protein>
<name>MTNA_PARM1</name>
<dbReference type="EC" id="5.3.1.23" evidence="1"/>
<dbReference type="EMBL" id="AP007255">
    <property type="protein sequence ID" value="BAE52927.1"/>
    <property type="molecule type" value="Genomic_DNA"/>
</dbReference>
<dbReference type="RefSeq" id="WP_011386472.1">
    <property type="nucleotide sequence ID" value="NC_007626.1"/>
</dbReference>
<dbReference type="SMR" id="Q2VZP8"/>
<dbReference type="STRING" id="342108.amb4123"/>
<dbReference type="KEGG" id="mag:amb4123"/>
<dbReference type="HOGENOM" id="CLU_016218_1_2_5"/>
<dbReference type="OrthoDB" id="9803436at2"/>
<dbReference type="UniPathway" id="UPA00904">
    <property type="reaction ID" value="UER00874"/>
</dbReference>
<dbReference type="Proteomes" id="UP000007058">
    <property type="component" value="Chromosome"/>
</dbReference>
<dbReference type="GO" id="GO:0046523">
    <property type="term" value="F:S-methyl-5-thioribose-1-phosphate isomerase activity"/>
    <property type="evidence" value="ECO:0007669"/>
    <property type="project" value="UniProtKB-UniRule"/>
</dbReference>
<dbReference type="GO" id="GO:0019509">
    <property type="term" value="P:L-methionine salvage from methylthioadenosine"/>
    <property type="evidence" value="ECO:0007669"/>
    <property type="project" value="UniProtKB-UniRule"/>
</dbReference>
<dbReference type="FunFam" id="1.20.120.420:FF:000003">
    <property type="entry name" value="Methylthioribose-1-phosphate isomerase"/>
    <property type="match status" value="1"/>
</dbReference>
<dbReference type="FunFam" id="3.40.50.10470:FF:000006">
    <property type="entry name" value="Methylthioribose-1-phosphate isomerase"/>
    <property type="match status" value="1"/>
</dbReference>
<dbReference type="Gene3D" id="1.20.120.420">
    <property type="entry name" value="translation initiation factor eif-2b, domain 1"/>
    <property type="match status" value="1"/>
</dbReference>
<dbReference type="Gene3D" id="3.40.50.10470">
    <property type="entry name" value="Translation initiation factor eif-2b, domain 2"/>
    <property type="match status" value="1"/>
</dbReference>
<dbReference type="HAMAP" id="MF_01678">
    <property type="entry name" value="Salvage_MtnA"/>
    <property type="match status" value="1"/>
</dbReference>
<dbReference type="InterPro" id="IPR000649">
    <property type="entry name" value="IF-2B-related"/>
</dbReference>
<dbReference type="InterPro" id="IPR005251">
    <property type="entry name" value="IF-M1Pi"/>
</dbReference>
<dbReference type="InterPro" id="IPR042529">
    <property type="entry name" value="IF_2B-like_C"/>
</dbReference>
<dbReference type="InterPro" id="IPR011559">
    <property type="entry name" value="Initiation_fac_2B_a/b/d"/>
</dbReference>
<dbReference type="InterPro" id="IPR027363">
    <property type="entry name" value="M1Pi_N"/>
</dbReference>
<dbReference type="InterPro" id="IPR037171">
    <property type="entry name" value="NagB/RpiA_transferase-like"/>
</dbReference>
<dbReference type="NCBIfam" id="TIGR00524">
    <property type="entry name" value="eIF-2B_rel"/>
    <property type="match status" value="1"/>
</dbReference>
<dbReference type="NCBIfam" id="NF004326">
    <property type="entry name" value="PRK05720.1"/>
    <property type="match status" value="1"/>
</dbReference>
<dbReference type="NCBIfam" id="TIGR00512">
    <property type="entry name" value="salvage_mtnA"/>
    <property type="match status" value="1"/>
</dbReference>
<dbReference type="PANTHER" id="PTHR43475">
    <property type="entry name" value="METHYLTHIORIBOSE-1-PHOSPHATE ISOMERASE"/>
    <property type="match status" value="1"/>
</dbReference>
<dbReference type="PANTHER" id="PTHR43475:SF1">
    <property type="entry name" value="METHYLTHIORIBOSE-1-PHOSPHATE ISOMERASE"/>
    <property type="match status" value="1"/>
</dbReference>
<dbReference type="Pfam" id="PF01008">
    <property type="entry name" value="IF-2B"/>
    <property type="match status" value="1"/>
</dbReference>
<dbReference type="SUPFAM" id="SSF100950">
    <property type="entry name" value="NagB/RpiA/CoA transferase-like"/>
    <property type="match status" value="1"/>
</dbReference>
<organism>
    <name type="scientific">Paramagnetospirillum magneticum (strain ATCC 700264 / AMB-1)</name>
    <name type="common">Magnetospirillum magneticum</name>
    <dbReference type="NCBI Taxonomy" id="342108"/>
    <lineage>
        <taxon>Bacteria</taxon>
        <taxon>Pseudomonadati</taxon>
        <taxon>Pseudomonadota</taxon>
        <taxon>Alphaproteobacteria</taxon>
        <taxon>Rhodospirillales</taxon>
        <taxon>Magnetospirillaceae</taxon>
        <taxon>Paramagnetospirillum</taxon>
    </lineage>
</organism>
<proteinExistence type="inferred from homology"/>
<gene>
    <name evidence="1" type="primary">mtnA</name>
    <name type="ordered locus">amb4123</name>
</gene>